<protein>
    <recommendedName>
        <fullName evidence="1">Ureidoglycolate lyase</fullName>
        <ecNumber evidence="1">4.3.2.3</ecNumber>
    </recommendedName>
    <alternativeName>
        <fullName evidence="1">Ureidoglycolatase</fullName>
    </alternativeName>
</protein>
<sequence>MKLEVLPLDQKTFSAYGDVIETQERDFFHINNGLVERYHDLAKVEVLEQDRTLISINRAQPAAMPIVVHELERHPLGTQAFVPMNGEAFVVIVALGDDKPDLSTLRAFISNGRQGVNYHRNVWHHPLFAWQTVTDFLTVDRGGSDNCDVESIPTHELCFT</sequence>
<gene>
    <name evidence="1" type="primary">allA</name>
    <name type="ordered locus">SG0527</name>
</gene>
<dbReference type="EC" id="4.3.2.3" evidence="1"/>
<dbReference type="EMBL" id="AM933173">
    <property type="protein sequence ID" value="CAR36424.1"/>
    <property type="molecule type" value="Genomic_DNA"/>
</dbReference>
<dbReference type="RefSeq" id="WP_000764660.1">
    <property type="nucleotide sequence ID" value="NC_011274.1"/>
</dbReference>
<dbReference type="SMR" id="B5R639"/>
<dbReference type="KEGG" id="seg:SG0527"/>
<dbReference type="HOGENOM" id="CLU_070848_1_1_6"/>
<dbReference type="UniPathway" id="UPA00395"/>
<dbReference type="Proteomes" id="UP000008321">
    <property type="component" value="Chromosome"/>
</dbReference>
<dbReference type="GO" id="GO:0004848">
    <property type="term" value="F:ureidoglycolate hydrolase activity"/>
    <property type="evidence" value="ECO:0007669"/>
    <property type="project" value="InterPro"/>
</dbReference>
<dbReference type="GO" id="GO:0050385">
    <property type="term" value="F:ureidoglycolate lyase activity"/>
    <property type="evidence" value="ECO:0007669"/>
    <property type="project" value="UniProtKB-UniRule"/>
</dbReference>
<dbReference type="GO" id="GO:0000256">
    <property type="term" value="P:allantoin catabolic process"/>
    <property type="evidence" value="ECO:0007669"/>
    <property type="project" value="UniProtKB-UniRule"/>
</dbReference>
<dbReference type="GO" id="GO:0006145">
    <property type="term" value="P:purine nucleobase catabolic process"/>
    <property type="evidence" value="ECO:0007669"/>
    <property type="project" value="UniProtKB-UniRule"/>
</dbReference>
<dbReference type="CDD" id="cd20298">
    <property type="entry name" value="cupin_UAH"/>
    <property type="match status" value="1"/>
</dbReference>
<dbReference type="FunFam" id="2.60.120.480:FF:000001">
    <property type="entry name" value="Ureidoglycolate lyase"/>
    <property type="match status" value="1"/>
</dbReference>
<dbReference type="Gene3D" id="2.60.120.480">
    <property type="entry name" value="Ureidoglycolate hydrolase"/>
    <property type="match status" value="1"/>
</dbReference>
<dbReference type="HAMAP" id="MF_00616">
    <property type="entry name" value="Ureidogly_lyase"/>
    <property type="match status" value="1"/>
</dbReference>
<dbReference type="InterPro" id="IPR011051">
    <property type="entry name" value="RmlC_Cupin_sf"/>
</dbReference>
<dbReference type="InterPro" id="IPR047233">
    <property type="entry name" value="UAH_cupin"/>
</dbReference>
<dbReference type="InterPro" id="IPR007247">
    <property type="entry name" value="Ureidogly_lyase"/>
</dbReference>
<dbReference type="InterPro" id="IPR023525">
    <property type="entry name" value="Ureidogly_lyase_bac"/>
</dbReference>
<dbReference type="InterPro" id="IPR024060">
    <property type="entry name" value="Ureidoglycolate_lyase_dom_sf"/>
</dbReference>
<dbReference type="NCBIfam" id="NF002948">
    <property type="entry name" value="PRK03606.1-1"/>
    <property type="match status" value="1"/>
</dbReference>
<dbReference type="NCBIfam" id="NF009932">
    <property type="entry name" value="PRK13395.1"/>
    <property type="match status" value="1"/>
</dbReference>
<dbReference type="PANTHER" id="PTHR21221">
    <property type="entry name" value="UREIDOGLYCOLATE HYDROLASE"/>
    <property type="match status" value="1"/>
</dbReference>
<dbReference type="PANTHER" id="PTHR21221:SF1">
    <property type="entry name" value="UREIDOGLYCOLATE LYASE"/>
    <property type="match status" value="1"/>
</dbReference>
<dbReference type="Pfam" id="PF04115">
    <property type="entry name" value="Ureidogly_lyase"/>
    <property type="match status" value="1"/>
</dbReference>
<dbReference type="PIRSF" id="PIRSF017306">
    <property type="entry name" value="Ureidogly_hydro"/>
    <property type="match status" value="1"/>
</dbReference>
<dbReference type="SUPFAM" id="SSF51182">
    <property type="entry name" value="RmlC-like cupins"/>
    <property type="match status" value="1"/>
</dbReference>
<comment type="function">
    <text evidence="1">Catalyzes the catabolism of the allantoin degradation intermediate (S)-ureidoglycolate, generating urea and glyoxylate. Involved in the utilization of allantoin as nitrogen source.</text>
</comment>
<comment type="catalytic activity">
    <reaction evidence="1">
        <text>(S)-ureidoglycolate = urea + glyoxylate</text>
        <dbReference type="Rhea" id="RHEA:11304"/>
        <dbReference type="ChEBI" id="CHEBI:16199"/>
        <dbReference type="ChEBI" id="CHEBI:36655"/>
        <dbReference type="ChEBI" id="CHEBI:57296"/>
        <dbReference type="EC" id="4.3.2.3"/>
    </reaction>
</comment>
<comment type="cofactor">
    <cofactor evidence="1">
        <name>Ni(2+)</name>
        <dbReference type="ChEBI" id="CHEBI:49786"/>
    </cofactor>
</comment>
<comment type="pathway">
    <text evidence="1">Nitrogen metabolism; (S)-allantoin degradation.</text>
</comment>
<comment type="subunit">
    <text evidence="1">Homodimer.</text>
</comment>
<comment type="similarity">
    <text evidence="1">Belongs to the ureidoglycolate lyase family.</text>
</comment>
<accession>B5R639</accession>
<reference key="1">
    <citation type="journal article" date="2008" name="Genome Res.">
        <title>Comparative genome analysis of Salmonella enteritidis PT4 and Salmonella gallinarum 287/91 provides insights into evolutionary and host adaptation pathways.</title>
        <authorList>
            <person name="Thomson N.R."/>
            <person name="Clayton D.J."/>
            <person name="Windhorst D."/>
            <person name="Vernikos G."/>
            <person name="Davidson S."/>
            <person name="Churcher C."/>
            <person name="Quail M.A."/>
            <person name="Stevens M."/>
            <person name="Jones M.A."/>
            <person name="Watson M."/>
            <person name="Barron A."/>
            <person name="Layton A."/>
            <person name="Pickard D."/>
            <person name="Kingsley R.A."/>
            <person name="Bignell A."/>
            <person name="Clark L."/>
            <person name="Harris B."/>
            <person name="Ormond D."/>
            <person name="Abdellah Z."/>
            <person name="Brooks K."/>
            <person name="Cherevach I."/>
            <person name="Chillingworth T."/>
            <person name="Woodward J."/>
            <person name="Norberczak H."/>
            <person name="Lord A."/>
            <person name="Arrowsmith C."/>
            <person name="Jagels K."/>
            <person name="Moule S."/>
            <person name="Mungall K."/>
            <person name="Saunders M."/>
            <person name="Whitehead S."/>
            <person name="Chabalgoity J.A."/>
            <person name="Maskell D."/>
            <person name="Humphreys T."/>
            <person name="Roberts M."/>
            <person name="Barrow P.A."/>
            <person name="Dougan G."/>
            <person name="Parkhill J."/>
        </authorList>
    </citation>
    <scope>NUCLEOTIDE SEQUENCE [LARGE SCALE GENOMIC DNA]</scope>
    <source>
        <strain>287/91 / NCTC 13346</strain>
    </source>
</reference>
<feature type="chain" id="PRO_1000130425" description="Ureidoglycolate lyase">
    <location>
        <begin position="1"/>
        <end position="160"/>
    </location>
</feature>
<keyword id="KW-0456">Lyase</keyword>
<keyword id="KW-0659">Purine metabolism</keyword>
<name>ALLA_SALG2</name>
<proteinExistence type="inferred from homology"/>
<evidence type="ECO:0000255" key="1">
    <source>
        <dbReference type="HAMAP-Rule" id="MF_00616"/>
    </source>
</evidence>
<organism>
    <name type="scientific">Salmonella gallinarum (strain 287/91 / NCTC 13346)</name>
    <dbReference type="NCBI Taxonomy" id="550538"/>
    <lineage>
        <taxon>Bacteria</taxon>
        <taxon>Pseudomonadati</taxon>
        <taxon>Pseudomonadota</taxon>
        <taxon>Gammaproteobacteria</taxon>
        <taxon>Enterobacterales</taxon>
        <taxon>Enterobacteriaceae</taxon>
        <taxon>Salmonella</taxon>
    </lineage>
</organism>